<comment type="function">
    <text evidence="1">Covalent carrier of the coenzyme of citrate lyase.</text>
</comment>
<comment type="subunit">
    <text evidence="1">Oligomer with a subunit composition of (alpha,beta,gamma)6.</text>
</comment>
<comment type="subcellular location">
    <subcellularLocation>
        <location evidence="1">Cytoplasm</location>
    </subcellularLocation>
</comment>
<comment type="similarity">
    <text evidence="1">Belongs to the CitD family.</text>
</comment>
<reference key="1">
    <citation type="journal article" date="2007" name="J. Bacteriol.">
        <title>Complete genome of acute rheumatic fever-associated serotype M5 Streptococcus pyogenes strain Manfredo.</title>
        <authorList>
            <person name="Holden M.T.G."/>
            <person name="Scott A."/>
            <person name="Cherevach I."/>
            <person name="Chillingworth T."/>
            <person name="Churcher C."/>
            <person name="Cronin A."/>
            <person name="Dowd L."/>
            <person name="Feltwell T."/>
            <person name="Hamlin N."/>
            <person name="Holroyd S."/>
            <person name="Jagels K."/>
            <person name="Moule S."/>
            <person name="Mungall K."/>
            <person name="Quail M.A."/>
            <person name="Price C."/>
            <person name="Rabbinowitsch E."/>
            <person name="Sharp S."/>
            <person name="Skelton J."/>
            <person name="Whitehead S."/>
            <person name="Barrell B.G."/>
            <person name="Kehoe M."/>
            <person name="Parkhill J."/>
        </authorList>
    </citation>
    <scope>NUCLEOTIDE SEQUENCE [LARGE SCALE GENOMIC DNA]</scope>
    <source>
        <strain>Manfredo</strain>
    </source>
</reference>
<feature type="chain" id="PRO_1000047084" description="Citrate lyase acyl carrier protein">
    <location>
        <begin position="1"/>
        <end position="102"/>
    </location>
</feature>
<feature type="modified residue" description="O-(phosphoribosyl dephospho-coenzyme A)serine" evidence="1">
    <location>
        <position position="14"/>
    </location>
</feature>
<proteinExistence type="inferred from homology"/>
<keyword id="KW-0963">Cytoplasm</keyword>
<keyword id="KW-0597">Phosphoprotein</keyword>
<sequence length="102" mass="11193">MDIKQTAVAGSLESSDLMITVSPNDEQTITITLDSSVEKQFGNHIRQLIHQTLVNLKVTAAKVEAVDKGALDCTIQARTIAAVHRAAGIDQYDWKEIDSWNV</sequence>
<dbReference type="EMBL" id="AM295007">
    <property type="protein sequence ID" value="CAM30220.1"/>
    <property type="molecule type" value="Genomic_DNA"/>
</dbReference>
<dbReference type="RefSeq" id="WP_010922328.1">
    <property type="nucleotide sequence ID" value="NC_009332.1"/>
</dbReference>
<dbReference type="SMR" id="A2REE5"/>
<dbReference type="KEGG" id="spf:SpyM50892"/>
<dbReference type="HOGENOM" id="CLU_158489_0_0_9"/>
<dbReference type="GO" id="GO:0005737">
    <property type="term" value="C:cytoplasm"/>
    <property type="evidence" value="ECO:0007669"/>
    <property type="project" value="UniProtKB-SubCell"/>
</dbReference>
<dbReference type="HAMAP" id="MF_00805">
    <property type="entry name" value="CitD"/>
    <property type="match status" value="1"/>
</dbReference>
<dbReference type="InterPro" id="IPR006495">
    <property type="entry name" value="CitD"/>
</dbReference>
<dbReference type="InterPro" id="IPR023439">
    <property type="entry name" value="Mal_deCO2ase/Cit_lyase_ACP"/>
</dbReference>
<dbReference type="NCBIfam" id="TIGR01608">
    <property type="entry name" value="citD"/>
    <property type="match status" value="1"/>
</dbReference>
<dbReference type="NCBIfam" id="NF009726">
    <property type="entry name" value="PRK13253.1"/>
    <property type="match status" value="1"/>
</dbReference>
<dbReference type="Pfam" id="PF06857">
    <property type="entry name" value="ACP"/>
    <property type="match status" value="1"/>
</dbReference>
<dbReference type="PIRSF" id="PIRSF002736">
    <property type="entry name" value="Citrt_lyas_gamma"/>
    <property type="match status" value="1"/>
</dbReference>
<protein>
    <recommendedName>
        <fullName evidence="1">Citrate lyase acyl carrier protein</fullName>
    </recommendedName>
    <alternativeName>
        <fullName evidence="1">Citrate lyase gamma chain</fullName>
    </alternativeName>
</protein>
<gene>
    <name evidence="1" type="primary">citD</name>
    <name type="ordered locus">SpyM50892</name>
</gene>
<name>CITD_STRPG</name>
<organism>
    <name type="scientific">Streptococcus pyogenes serotype M5 (strain Manfredo)</name>
    <dbReference type="NCBI Taxonomy" id="160491"/>
    <lineage>
        <taxon>Bacteria</taxon>
        <taxon>Bacillati</taxon>
        <taxon>Bacillota</taxon>
        <taxon>Bacilli</taxon>
        <taxon>Lactobacillales</taxon>
        <taxon>Streptococcaceae</taxon>
        <taxon>Streptococcus</taxon>
    </lineage>
</organism>
<evidence type="ECO:0000255" key="1">
    <source>
        <dbReference type="HAMAP-Rule" id="MF_00805"/>
    </source>
</evidence>
<accession>A2REE5</accession>